<proteinExistence type="inferred from homology"/>
<accession>Q8HMZ7</accession>
<keyword id="KW-0249">Electron transport</keyword>
<keyword id="KW-0349">Heme</keyword>
<keyword id="KW-0408">Iron</keyword>
<keyword id="KW-0472">Membrane</keyword>
<keyword id="KW-0479">Metal-binding</keyword>
<keyword id="KW-0496">Mitochondrion</keyword>
<keyword id="KW-0999">Mitochondrion inner membrane</keyword>
<keyword id="KW-0679">Respiratory chain</keyword>
<keyword id="KW-0812">Transmembrane</keyword>
<keyword id="KW-1133">Transmembrane helix</keyword>
<keyword id="KW-0813">Transport</keyword>
<keyword id="KW-0830">Ubiquinone</keyword>
<reference key="1">
    <citation type="journal article" date="2003" name="Nucleic Acids Res.">
        <title>A comparison of three fission yeast mitochondrial genomes.</title>
        <authorList>
            <person name="Bullerwell C.E."/>
            <person name="Leigh J."/>
            <person name="Forget L."/>
            <person name="Lang B.F."/>
        </authorList>
    </citation>
    <scope>NUCLEOTIDE SEQUENCE [LARGE SCALE GENOMIC DNA]</scope>
    <source>
        <strain>ATCC 10660 / CBS 354 / IFO 1609 / NRRL Y-1361</strain>
    </source>
</reference>
<sequence length="389" mass="44659">MKNLRKFPLVNLFNNYMIDAPEPSNINYFWNFGSLLATVLGIQILSGIFLAMFYTPHFDLAFLSVEHIMREVNYGWLIRYMHATGASFFFAFLYLHIARGLFYGSYRRPRTLTWTIGTAIFFLTILTAFLGYTLPNSQTSYWGATVITNLVSSIPFIGHDLVEFLWGGFNVNNATLNRFFSLHYLLPFIISALAIMHMIALHTNGSSNPLGITGNLDRIPMSPHYLIKDLVTIFLFFIIFSIIIFYFPTILSDADNAVPADPMKTPMSIVPEWYLLPFYAILRSIPNKLFGVIAMFFAIFILFFLPLLDFNYIRGNKFQPIGKLLFWCFISNFILLMFIGAKHVEIPYVAIGTYATLFYFAYFVFFIPLSSLISNTLLDLNQKSNSITK</sequence>
<protein>
    <recommendedName>
        <fullName>Cytochrome b</fullName>
    </recommendedName>
    <alternativeName>
        <fullName>Complex III subunit 3</fullName>
    </alternativeName>
    <alternativeName>
        <fullName>Complex III subunit III</fullName>
    </alternativeName>
    <alternativeName>
        <fullName>Cytochrome b-c1 complex subunit 3</fullName>
    </alternativeName>
    <alternativeName>
        <fullName>Ubiquinol-cytochrome-c reductase complex cytochrome b subunit</fullName>
    </alternativeName>
</protein>
<evidence type="ECO:0000250" key="1"/>
<evidence type="ECO:0000250" key="2">
    <source>
        <dbReference type="UniProtKB" id="P00157"/>
    </source>
</evidence>
<evidence type="ECO:0000250" key="3">
    <source>
        <dbReference type="UniProtKB" id="P00163"/>
    </source>
</evidence>
<evidence type="ECO:0000255" key="4">
    <source>
        <dbReference type="PROSITE-ProRule" id="PRU00967"/>
    </source>
</evidence>
<evidence type="ECO:0000255" key="5">
    <source>
        <dbReference type="PROSITE-ProRule" id="PRU00968"/>
    </source>
</evidence>
<dbReference type="EMBL" id="AF547983">
    <property type="protein sequence ID" value="AAN37912.1"/>
    <property type="molecule type" value="Genomic_DNA"/>
</dbReference>
<dbReference type="RefSeq" id="NP_705619.1">
    <property type="nucleotide sequence ID" value="NC_004332.1"/>
</dbReference>
<dbReference type="SMR" id="Q8HMZ7"/>
<dbReference type="GeneID" id="805367"/>
<dbReference type="VEuPathDB" id="FungiDB:ScjafMp01"/>
<dbReference type="GO" id="GO:0005743">
    <property type="term" value="C:mitochondrial inner membrane"/>
    <property type="evidence" value="ECO:0007669"/>
    <property type="project" value="UniProtKB-SubCell"/>
</dbReference>
<dbReference type="GO" id="GO:0045275">
    <property type="term" value="C:respiratory chain complex III"/>
    <property type="evidence" value="ECO:0007669"/>
    <property type="project" value="InterPro"/>
</dbReference>
<dbReference type="GO" id="GO:0046872">
    <property type="term" value="F:metal ion binding"/>
    <property type="evidence" value="ECO:0007669"/>
    <property type="project" value="UniProtKB-KW"/>
</dbReference>
<dbReference type="GO" id="GO:0008121">
    <property type="term" value="F:ubiquinol-cytochrome-c reductase activity"/>
    <property type="evidence" value="ECO:0007669"/>
    <property type="project" value="InterPro"/>
</dbReference>
<dbReference type="GO" id="GO:0006122">
    <property type="term" value="P:mitochondrial electron transport, ubiquinol to cytochrome c"/>
    <property type="evidence" value="ECO:0007669"/>
    <property type="project" value="TreeGrafter"/>
</dbReference>
<dbReference type="CDD" id="cd00290">
    <property type="entry name" value="cytochrome_b_C"/>
    <property type="match status" value="1"/>
</dbReference>
<dbReference type="CDD" id="cd00284">
    <property type="entry name" value="Cytochrome_b_N"/>
    <property type="match status" value="1"/>
</dbReference>
<dbReference type="Gene3D" id="1.20.810.10">
    <property type="entry name" value="Cytochrome Bc1 Complex, Chain C"/>
    <property type="match status" value="1"/>
</dbReference>
<dbReference type="InterPro" id="IPR005798">
    <property type="entry name" value="Cyt_b/b6_C"/>
</dbReference>
<dbReference type="InterPro" id="IPR036150">
    <property type="entry name" value="Cyt_b/b6_C_sf"/>
</dbReference>
<dbReference type="InterPro" id="IPR005797">
    <property type="entry name" value="Cyt_b/b6_N"/>
</dbReference>
<dbReference type="InterPro" id="IPR027387">
    <property type="entry name" value="Cytb/b6-like_sf"/>
</dbReference>
<dbReference type="InterPro" id="IPR030689">
    <property type="entry name" value="Cytochrome_b"/>
</dbReference>
<dbReference type="InterPro" id="IPR048260">
    <property type="entry name" value="Cytochrome_b_C_euk/bac"/>
</dbReference>
<dbReference type="InterPro" id="IPR048259">
    <property type="entry name" value="Cytochrome_b_N_euk/bac"/>
</dbReference>
<dbReference type="InterPro" id="IPR016174">
    <property type="entry name" value="Di-haem_cyt_TM"/>
</dbReference>
<dbReference type="PANTHER" id="PTHR19271">
    <property type="entry name" value="CYTOCHROME B"/>
    <property type="match status" value="1"/>
</dbReference>
<dbReference type="PANTHER" id="PTHR19271:SF16">
    <property type="entry name" value="CYTOCHROME B"/>
    <property type="match status" value="1"/>
</dbReference>
<dbReference type="Pfam" id="PF00032">
    <property type="entry name" value="Cytochrom_B_C"/>
    <property type="match status" value="1"/>
</dbReference>
<dbReference type="Pfam" id="PF00033">
    <property type="entry name" value="Cytochrome_B"/>
    <property type="match status" value="1"/>
</dbReference>
<dbReference type="PIRSF" id="PIRSF038885">
    <property type="entry name" value="COB"/>
    <property type="match status" value="1"/>
</dbReference>
<dbReference type="SUPFAM" id="SSF81648">
    <property type="entry name" value="a domain/subunit of cytochrome bc1 complex (Ubiquinol-cytochrome c reductase)"/>
    <property type="match status" value="1"/>
</dbReference>
<dbReference type="SUPFAM" id="SSF81342">
    <property type="entry name" value="Transmembrane di-heme cytochromes"/>
    <property type="match status" value="1"/>
</dbReference>
<dbReference type="PROSITE" id="PS51003">
    <property type="entry name" value="CYTB_CTER"/>
    <property type="match status" value="1"/>
</dbReference>
<dbReference type="PROSITE" id="PS51002">
    <property type="entry name" value="CYTB_NTER"/>
    <property type="match status" value="1"/>
</dbReference>
<organism>
    <name type="scientific">Schizosaccharomyces japonicus</name>
    <name type="common">Fission yeast</name>
    <dbReference type="NCBI Taxonomy" id="4897"/>
    <lineage>
        <taxon>Eukaryota</taxon>
        <taxon>Fungi</taxon>
        <taxon>Dikarya</taxon>
        <taxon>Ascomycota</taxon>
        <taxon>Taphrinomycotina</taxon>
        <taxon>Schizosaccharomycetes</taxon>
        <taxon>Schizosaccharomycetales</taxon>
        <taxon>Schizosaccharomycetaceae</taxon>
        <taxon>Schizosaccharomyces</taxon>
    </lineage>
</organism>
<gene>
    <name type="primary">cob</name>
    <name type="synonym">cytb</name>
</gene>
<comment type="function">
    <text evidence="3">Component of the ubiquinol-cytochrome c reductase complex (complex III or cytochrome b-c1 complex) that is part of the mitochondrial respiratory chain. The b-c1 complex mediates electron transfer from ubiquinol to cytochrome c. Contributes to the generation of a proton gradient across the mitochondrial membrane that is then used for ATP synthesis.</text>
</comment>
<comment type="cofactor">
    <cofactor evidence="3">
        <name>heme b</name>
        <dbReference type="ChEBI" id="CHEBI:60344"/>
    </cofactor>
    <text evidence="3">Binds 2 heme b groups non-covalently.</text>
</comment>
<comment type="subunit">
    <text evidence="3">Fungal cytochrome b-c1 complex contains 10 subunits; 3 respiratory subunits, 2 core proteins and 5 low-molecular weight proteins. Cytochrome b-c1 complex is a homodimer.</text>
</comment>
<comment type="subcellular location">
    <subcellularLocation>
        <location evidence="3">Mitochondrion inner membrane</location>
        <topology evidence="3">Multi-pass membrane protein</topology>
    </subcellularLocation>
</comment>
<comment type="miscellaneous">
    <text evidence="1">Heme 1 (or BL or b562) is low-potential and absorbs at about 562 nm, and heme 2 (or BH or b566) is high-potential and absorbs at about 566 nm.</text>
</comment>
<comment type="similarity">
    <text evidence="4 5">Belongs to the cytochrome b family.</text>
</comment>
<comment type="caution">
    <text evidence="3">The protein contains only eight transmembrane helices, not nine as predicted by bioinformatics tools.</text>
</comment>
<feature type="chain" id="PRO_0000061760" description="Cytochrome b">
    <location>
        <begin position="1"/>
        <end position="389"/>
    </location>
</feature>
<feature type="transmembrane region" description="Helical" evidence="3">
    <location>
        <begin position="32"/>
        <end position="52"/>
    </location>
</feature>
<feature type="transmembrane region" description="Helical" evidence="3">
    <location>
        <begin position="76"/>
        <end position="98"/>
    </location>
</feature>
<feature type="transmembrane region" description="Helical" evidence="3">
    <location>
        <begin position="113"/>
        <end position="133"/>
    </location>
</feature>
<feature type="transmembrane region" description="Helical" evidence="3">
    <location>
        <begin position="179"/>
        <end position="199"/>
    </location>
</feature>
<feature type="transmembrane region" description="Helical" evidence="3">
    <location>
        <begin position="225"/>
        <end position="245"/>
    </location>
</feature>
<feature type="transmembrane region" description="Helical" evidence="3">
    <location>
        <begin position="289"/>
        <end position="309"/>
    </location>
</feature>
<feature type="transmembrane region" description="Helical" evidence="3">
    <location>
        <begin position="321"/>
        <end position="341"/>
    </location>
</feature>
<feature type="transmembrane region" description="Helical" evidence="3">
    <location>
        <begin position="348"/>
        <end position="368"/>
    </location>
</feature>
<feature type="binding site" description="axial binding residue" evidence="5">
    <location>
        <position position="82"/>
    </location>
    <ligand>
        <name>heme b</name>
        <dbReference type="ChEBI" id="CHEBI:60344"/>
        <label>b562</label>
    </ligand>
    <ligandPart>
        <name>Fe</name>
        <dbReference type="ChEBI" id="CHEBI:18248"/>
    </ligandPart>
</feature>
<feature type="binding site" description="axial binding residue" evidence="5">
    <location>
        <position position="96"/>
    </location>
    <ligand>
        <name>heme b</name>
        <dbReference type="ChEBI" id="CHEBI:60344"/>
        <label>b566</label>
    </ligand>
    <ligandPart>
        <name>Fe</name>
        <dbReference type="ChEBI" id="CHEBI:18248"/>
    </ligandPart>
</feature>
<feature type="binding site" description="axial binding residue" evidence="5">
    <location>
        <position position="183"/>
    </location>
    <ligand>
        <name>heme b</name>
        <dbReference type="ChEBI" id="CHEBI:60344"/>
        <label>b562</label>
    </ligand>
    <ligandPart>
        <name>Fe</name>
        <dbReference type="ChEBI" id="CHEBI:18248"/>
    </ligandPart>
</feature>
<feature type="binding site" description="axial binding residue" evidence="5">
    <location>
        <position position="197"/>
    </location>
    <ligand>
        <name>heme b</name>
        <dbReference type="ChEBI" id="CHEBI:60344"/>
        <label>b566</label>
    </ligand>
    <ligandPart>
        <name>Fe</name>
        <dbReference type="ChEBI" id="CHEBI:18248"/>
    </ligandPart>
</feature>
<feature type="binding site" evidence="2">
    <location>
        <position position="202"/>
    </location>
    <ligand>
        <name>a ubiquinone</name>
        <dbReference type="ChEBI" id="CHEBI:16389"/>
    </ligand>
</feature>
<name>CYB_SCHJP</name>
<geneLocation type="mitochondrion"/>